<dbReference type="EC" id="3.4.21.88" evidence="1"/>
<dbReference type="EMBL" id="CP000879">
    <property type="protein sequence ID" value="ABX31953.1"/>
    <property type="molecule type" value="Genomic_DNA"/>
</dbReference>
<dbReference type="RefSeq" id="WP_012209053.1">
    <property type="nucleotide sequence ID" value="NC_010003.1"/>
</dbReference>
<dbReference type="SMR" id="A9BGA3"/>
<dbReference type="STRING" id="403833.Pmob_1237"/>
<dbReference type="MEROPS" id="S24.001"/>
<dbReference type="KEGG" id="pmo:Pmob_1237"/>
<dbReference type="eggNOG" id="COG1974">
    <property type="taxonomic scope" value="Bacteria"/>
</dbReference>
<dbReference type="HOGENOM" id="CLU_066192_45_1_0"/>
<dbReference type="OrthoDB" id="9802364at2"/>
<dbReference type="Proteomes" id="UP000000789">
    <property type="component" value="Chromosome"/>
</dbReference>
<dbReference type="CollecTF" id="EXPREG_000002c0"/>
<dbReference type="GO" id="GO:0032993">
    <property type="term" value="C:protein-DNA complex"/>
    <property type="evidence" value="ECO:0000315"/>
    <property type="project" value="CollecTF"/>
</dbReference>
<dbReference type="GO" id="GO:0043565">
    <property type="term" value="F:sequence-specific DNA binding"/>
    <property type="evidence" value="ECO:0000315"/>
    <property type="project" value="CollecTF"/>
</dbReference>
<dbReference type="GO" id="GO:0004252">
    <property type="term" value="F:serine-type endopeptidase activity"/>
    <property type="evidence" value="ECO:0007669"/>
    <property type="project" value="UniProtKB-UniRule"/>
</dbReference>
<dbReference type="GO" id="GO:0006281">
    <property type="term" value="P:DNA repair"/>
    <property type="evidence" value="ECO:0007669"/>
    <property type="project" value="UniProtKB-UniRule"/>
</dbReference>
<dbReference type="GO" id="GO:0006260">
    <property type="term" value="P:DNA replication"/>
    <property type="evidence" value="ECO:0007669"/>
    <property type="project" value="UniProtKB-UniRule"/>
</dbReference>
<dbReference type="GO" id="GO:0045892">
    <property type="term" value="P:negative regulation of DNA-templated transcription"/>
    <property type="evidence" value="ECO:0007669"/>
    <property type="project" value="UniProtKB-UniRule"/>
</dbReference>
<dbReference type="GO" id="GO:0006508">
    <property type="term" value="P:proteolysis"/>
    <property type="evidence" value="ECO:0007669"/>
    <property type="project" value="InterPro"/>
</dbReference>
<dbReference type="GO" id="GO:0009432">
    <property type="term" value="P:SOS response"/>
    <property type="evidence" value="ECO:0007669"/>
    <property type="project" value="UniProtKB-UniRule"/>
</dbReference>
<dbReference type="CDD" id="cd06529">
    <property type="entry name" value="S24_LexA-like"/>
    <property type="match status" value="1"/>
</dbReference>
<dbReference type="FunFam" id="1.10.10.10:FF:000009">
    <property type="entry name" value="LexA repressor"/>
    <property type="match status" value="1"/>
</dbReference>
<dbReference type="Gene3D" id="2.10.109.10">
    <property type="entry name" value="Umud Fragment, subunit A"/>
    <property type="match status" value="1"/>
</dbReference>
<dbReference type="Gene3D" id="1.10.10.10">
    <property type="entry name" value="Winged helix-like DNA-binding domain superfamily/Winged helix DNA-binding domain"/>
    <property type="match status" value="1"/>
</dbReference>
<dbReference type="HAMAP" id="MF_00015">
    <property type="entry name" value="LexA"/>
    <property type="match status" value="1"/>
</dbReference>
<dbReference type="InterPro" id="IPR006200">
    <property type="entry name" value="LexA"/>
</dbReference>
<dbReference type="InterPro" id="IPR039418">
    <property type="entry name" value="LexA-like"/>
</dbReference>
<dbReference type="InterPro" id="IPR036286">
    <property type="entry name" value="LexA/Signal_pep-like_sf"/>
</dbReference>
<dbReference type="InterPro" id="IPR006199">
    <property type="entry name" value="LexA_DNA-bd_dom"/>
</dbReference>
<dbReference type="InterPro" id="IPR050077">
    <property type="entry name" value="LexA_repressor"/>
</dbReference>
<dbReference type="InterPro" id="IPR006197">
    <property type="entry name" value="Peptidase_S24_LexA"/>
</dbReference>
<dbReference type="InterPro" id="IPR015927">
    <property type="entry name" value="Peptidase_S24_S26A/B/C"/>
</dbReference>
<dbReference type="InterPro" id="IPR036388">
    <property type="entry name" value="WH-like_DNA-bd_sf"/>
</dbReference>
<dbReference type="InterPro" id="IPR036390">
    <property type="entry name" value="WH_DNA-bd_sf"/>
</dbReference>
<dbReference type="NCBIfam" id="TIGR00498">
    <property type="entry name" value="lexA"/>
    <property type="match status" value="1"/>
</dbReference>
<dbReference type="PANTHER" id="PTHR33516">
    <property type="entry name" value="LEXA REPRESSOR"/>
    <property type="match status" value="1"/>
</dbReference>
<dbReference type="PANTHER" id="PTHR33516:SF2">
    <property type="entry name" value="LEXA REPRESSOR-RELATED"/>
    <property type="match status" value="1"/>
</dbReference>
<dbReference type="Pfam" id="PF01726">
    <property type="entry name" value="LexA_DNA_bind"/>
    <property type="match status" value="1"/>
</dbReference>
<dbReference type="Pfam" id="PF00717">
    <property type="entry name" value="Peptidase_S24"/>
    <property type="match status" value="1"/>
</dbReference>
<dbReference type="PRINTS" id="PR00726">
    <property type="entry name" value="LEXASERPTASE"/>
</dbReference>
<dbReference type="SUPFAM" id="SSF51306">
    <property type="entry name" value="LexA/Signal peptidase"/>
    <property type="match status" value="1"/>
</dbReference>
<dbReference type="SUPFAM" id="SSF46785">
    <property type="entry name" value="Winged helix' DNA-binding domain"/>
    <property type="match status" value="1"/>
</dbReference>
<keyword id="KW-0068">Autocatalytic cleavage</keyword>
<keyword id="KW-0227">DNA damage</keyword>
<keyword id="KW-0234">DNA repair</keyword>
<keyword id="KW-0235">DNA replication</keyword>
<keyword id="KW-0238">DNA-binding</keyword>
<keyword id="KW-0378">Hydrolase</keyword>
<keyword id="KW-0678">Repressor</keyword>
<keyword id="KW-0742">SOS response</keyword>
<keyword id="KW-0804">Transcription</keyword>
<keyword id="KW-0805">Transcription regulation</keyword>
<organism>
    <name type="scientific">Petrotoga mobilis (strain DSM 10674 / SJ95)</name>
    <dbReference type="NCBI Taxonomy" id="403833"/>
    <lineage>
        <taxon>Bacteria</taxon>
        <taxon>Thermotogati</taxon>
        <taxon>Thermotogota</taxon>
        <taxon>Thermotogae</taxon>
        <taxon>Petrotogales</taxon>
        <taxon>Petrotogaceae</taxon>
        <taxon>Petrotoga</taxon>
    </lineage>
</organism>
<comment type="function">
    <text evidence="1">Represses a number of genes involved in the response to DNA damage (SOS response), including recA and lexA. In the presence of single-stranded DNA, RecA interacts with LexA causing an autocatalytic cleavage which disrupts the DNA-binding part of LexA, leading to derepression of the SOS regulon and eventually DNA repair.</text>
</comment>
<comment type="catalytic activity">
    <reaction evidence="1">
        <text>Hydrolysis of Ala-|-Gly bond in repressor LexA.</text>
        <dbReference type="EC" id="3.4.21.88"/>
    </reaction>
</comment>
<comment type="subunit">
    <text evidence="1">Homodimer.</text>
</comment>
<comment type="similarity">
    <text evidence="1">Belongs to the peptidase S24 family.</text>
</comment>
<evidence type="ECO:0000255" key="1">
    <source>
        <dbReference type="HAMAP-Rule" id="MF_00015"/>
    </source>
</evidence>
<protein>
    <recommendedName>
        <fullName evidence="1">LexA repressor</fullName>
        <ecNumber evidence="1">3.4.21.88</ecNumber>
    </recommendedName>
</protein>
<sequence length="205" mass="23336">MEELTKRQSQVLDFIKSYMEKNGFAPSIRDIMKHFNFKSPRAAHKHLIILEKKGYIERKNVSRGIKMMPKSGEIFATETLAPVSGKIAAGDAIEAIQTISDYIPIPTNFFPKNYEYFSLRVEGNSMIEAQIKSGDFVLIRKQDYAMDGDIVVALIDGNDATLKRYKRLNEDEVLLIPENKSMKEIKVKADHLKIQGKMVGLIRVL</sequence>
<proteinExistence type="inferred from homology"/>
<reference key="1">
    <citation type="submission" date="2007-11" db="EMBL/GenBank/DDBJ databases">
        <title>Complete sequence of Petroga mobilis SJ95.</title>
        <authorList>
            <consortium name="US DOE Joint Genome Institute"/>
            <person name="Copeland A."/>
            <person name="Lucas S."/>
            <person name="Lapidus A."/>
            <person name="Barry K."/>
            <person name="Glavina del Rio T."/>
            <person name="Dalin E."/>
            <person name="Tice H."/>
            <person name="Pitluck S."/>
            <person name="Meincke L."/>
            <person name="Brettin T."/>
            <person name="Bruce D."/>
            <person name="Detter J.C."/>
            <person name="Han C."/>
            <person name="Kuske C.R."/>
            <person name="Schmutz J."/>
            <person name="Larimer F."/>
            <person name="Land M."/>
            <person name="Hauser L."/>
            <person name="Kyrpides N."/>
            <person name="Mikhailova N."/>
            <person name="Noll K."/>
            <person name="Richardson P."/>
        </authorList>
    </citation>
    <scope>NUCLEOTIDE SEQUENCE [LARGE SCALE GENOMIC DNA]</scope>
    <source>
        <strain>DSM 10674 / SJ95</strain>
    </source>
</reference>
<feature type="chain" id="PRO_1000074061" description="LexA repressor">
    <location>
        <begin position="1"/>
        <end position="205"/>
    </location>
</feature>
<feature type="DNA-binding region" description="H-T-H motif" evidence="1">
    <location>
        <begin position="28"/>
        <end position="48"/>
    </location>
</feature>
<feature type="active site" description="For autocatalytic cleavage activity" evidence="1">
    <location>
        <position position="125"/>
    </location>
</feature>
<feature type="active site" description="For autocatalytic cleavage activity" evidence="1">
    <location>
        <position position="163"/>
    </location>
</feature>
<feature type="site" description="Cleavage; by autolysis" evidence="1">
    <location>
        <begin position="89"/>
        <end position="90"/>
    </location>
</feature>
<gene>
    <name evidence="1" type="primary">lexA</name>
    <name type="ordered locus">Pmob_1237</name>
</gene>
<accession>A9BGA3</accession>
<name>LEXA_PETMO</name>